<keyword id="KW-0227">DNA damage</keyword>
<keyword id="KW-0233">DNA recombination</keyword>
<keyword id="KW-0234">DNA repair</keyword>
<keyword id="KW-0479">Metal-binding</keyword>
<keyword id="KW-1185">Reference proteome</keyword>
<keyword id="KW-0862">Zinc</keyword>
<keyword id="KW-0863">Zinc-finger</keyword>
<protein>
    <recommendedName>
        <fullName evidence="1">Recombination protein RecR</fullName>
    </recommendedName>
</protein>
<proteinExistence type="inferred from homology"/>
<feature type="chain" id="PRO_0000190428" description="Recombination protein RecR">
    <location>
        <begin position="1"/>
        <end position="197"/>
    </location>
</feature>
<feature type="domain" description="Toprim" evidence="1">
    <location>
        <begin position="78"/>
        <end position="173"/>
    </location>
</feature>
<feature type="zinc finger region" description="C4-type" evidence="1">
    <location>
        <begin position="55"/>
        <end position="70"/>
    </location>
</feature>
<gene>
    <name evidence="1" type="primary">recR</name>
    <name type="ordered locus">XCC1003</name>
</gene>
<sequence>MSSLLEQLIEAFRVLPGVGQKSAQRMAYHVLEREREGGRRLAAALANAVEKVGHCVQCRDFTESEVCAICANSGRDRQQLCVVESPADRLAIEHATGYRGVYFILQGRLSPLDGIGPRELGLDRLAERLAAGEVTEMIIATNATVEGEATAHYLAQLARQHSVRPSRLAQGMPLGGELEYVDRGTLSHAFGTRSEVL</sequence>
<reference key="1">
    <citation type="journal article" date="2002" name="Nature">
        <title>Comparison of the genomes of two Xanthomonas pathogens with differing host specificities.</title>
        <authorList>
            <person name="da Silva A.C.R."/>
            <person name="Ferro J.A."/>
            <person name="Reinach F.C."/>
            <person name="Farah C.S."/>
            <person name="Furlan L.R."/>
            <person name="Quaggio R.B."/>
            <person name="Monteiro-Vitorello C.B."/>
            <person name="Van Sluys M.A."/>
            <person name="Almeida N.F. Jr."/>
            <person name="Alves L.M.C."/>
            <person name="do Amaral A.M."/>
            <person name="Bertolini M.C."/>
            <person name="Camargo L.E.A."/>
            <person name="Camarotte G."/>
            <person name="Cannavan F."/>
            <person name="Cardozo J."/>
            <person name="Chambergo F."/>
            <person name="Ciapina L.P."/>
            <person name="Cicarelli R.M.B."/>
            <person name="Coutinho L.L."/>
            <person name="Cursino-Santos J.R."/>
            <person name="El-Dorry H."/>
            <person name="Faria J.B."/>
            <person name="Ferreira A.J.S."/>
            <person name="Ferreira R.C.C."/>
            <person name="Ferro M.I.T."/>
            <person name="Formighieri E.F."/>
            <person name="Franco M.C."/>
            <person name="Greggio C.C."/>
            <person name="Gruber A."/>
            <person name="Katsuyama A.M."/>
            <person name="Kishi L.T."/>
            <person name="Leite R.P."/>
            <person name="Lemos E.G.M."/>
            <person name="Lemos M.V.F."/>
            <person name="Locali E.C."/>
            <person name="Machado M.A."/>
            <person name="Madeira A.M.B.N."/>
            <person name="Martinez-Rossi N.M."/>
            <person name="Martins E.C."/>
            <person name="Meidanis J."/>
            <person name="Menck C.F.M."/>
            <person name="Miyaki C.Y."/>
            <person name="Moon D.H."/>
            <person name="Moreira L.M."/>
            <person name="Novo M.T.M."/>
            <person name="Okura V.K."/>
            <person name="Oliveira M.C."/>
            <person name="Oliveira V.R."/>
            <person name="Pereira H.A."/>
            <person name="Rossi A."/>
            <person name="Sena J.A.D."/>
            <person name="Silva C."/>
            <person name="de Souza R.F."/>
            <person name="Spinola L.A.F."/>
            <person name="Takita M.A."/>
            <person name="Tamura R.E."/>
            <person name="Teixeira E.C."/>
            <person name="Tezza R.I.D."/>
            <person name="Trindade dos Santos M."/>
            <person name="Truffi D."/>
            <person name="Tsai S.M."/>
            <person name="White F.F."/>
            <person name="Setubal J.C."/>
            <person name="Kitajima J.P."/>
        </authorList>
    </citation>
    <scope>NUCLEOTIDE SEQUENCE [LARGE SCALE GENOMIC DNA]</scope>
    <source>
        <strain>ATCC 33913 / DSM 3586 / NCPPB 528 / LMG 568 / P 25</strain>
    </source>
</reference>
<accession>Q8PBW4</accession>
<dbReference type="EMBL" id="AE008922">
    <property type="protein sequence ID" value="AAM40303.1"/>
    <property type="molecule type" value="Genomic_DNA"/>
</dbReference>
<dbReference type="RefSeq" id="NP_636379.1">
    <property type="nucleotide sequence ID" value="NC_003902.1"/>
</dbReference>
<dbReference type="RefSeq" id="WP_011036206.1">
    <property type="nucleotide sequence ID" value="NC_003902.1"/>
</dbReference>
<dbReference type="SMR" id="Q8PBW4"/>
<dbReference type="STRING" id="190485.XCC1003"/>
<dbReference type="EnsemblBacteria" id="AAM40303">
    <property type="protein sequence ID" value="AAM40303"/>
    <property type="gene ID" value="XCC1003"/>
</dbReference>
<dbReference type="KEGG" id="xcc:XCC1003"/>
<dbReference type="PATRIC" id="fig|190485.4.peg.1067"/>
<dbReference type="eggNOG" id="COG0353">
    <property type="taxonomic scope" value="Bacteria"/>
</dbReference>
<dbReference type="HOGENOM" id="CLU_060739_1_2_6"/>
<dbReference type="OrthoDB" id="9802672at2"/>
<dbReference type="Proteomes" id="UP000001010">
    <property type="component" value="Chromosome"/>
</dbReference>
<dbReference type="GO" id="GO:0003677">
    <property type="term" value="F:DNA binding"/>
    <property type="evidence" value="ECO:0007669"/>
    <property type="project" value="UniProtKB-UniRule"/>
</dbReference>
<dbReference type="GO" id="GO:0008270">
    <property type="term" value="F:zinc ion binding"/>
    <property type="evidence" value="ECO:0007669"/>
    <property type="project" value="UniProtKB-KW"/>
</dbReference>
<dbReference type="GO" id="GO:0006302">
    <property type="term" value="P:double-strand break repair"/>
    <property type="evidence" value="ECO:0000318"/>
    <property type="project" value="GO_Central"/>
</dbReference>
<dbReference type="GO" id="GO:0000725">
    <property type="term" value="P:recombinational repair"/>
    <property type="evidence" value="ECO:0000318"/>
    <property type="project" value="GO_Central"/>
</dbReference>
<dbReference type="CDD" id="cd01025">
    <property type="entry name" value="TOPRIM_recR"/>
    <property type="match status" value="1"/>
</dbReference>
<dbReference type="Gene3D" id="3.40.1360.10">
    <property type="match status" value="1"/>
</dbReference>
<dbReference type="Gene3D" id="6.10.250.240">
    <property type="match status" value="1"/>
</dbReference>
<dbReference type="Gene3D" id="1.10.8.420">
    <property type="entry name" value="RecR Domain 1"/>
    <property type="match status" value="1"/>
</dbReference>
<dbReference type="HAMAP" id="MF_00017">
    <property type="entry name" value="RecR"/>
    <property type="match status" value="1"/>
</dbReference>
<dbReference type="InterPro" id="IPR000093">
    <property type="entry name" value="DNA_Rcmb_RecR"/>
</dbReference>
<dbReference type="InterPro" id="IPR023627">
    <property type="entry name" value="Rcmb_RecR"/>
</dbReference>
<dbReference type="InterPro" id="IPR015967">
    <property type="entry name" value="Rcmb_RecR_Znf"/>
</dbReference>
<dbReference type="InterPro" id="IPR006171">
    <property type="entry name" value="TOPRIM_dom"/>
</dbReference>
<dbReference type="InterPro" id="IPR034137">
    <property type="entry name" value="TOPRIM_RecR"/>
</dbReference>
<dbReference type="NCBIfam" id="TIGR00615">
    <property type="entry name" value="recR"/>
    <property type="match status" value="1"/>
</dbReference>
<dbReference type="PANTHER" id="PTHR30446">
    <property type="entry name" value="RECOMBINATION PROTEIN RECR"/>
    <property type="match status" value="1"/>
</dbReference>
<dbReference type="PANTHER" id="PTHR30446:SF0">
    <property type="entry name" value="RECOMBINATION PROTEIN RECR"/>
    <property type="match status" value="1"/>
</dbReference>
<dbReference type="Pfam" id="PF21175">
    <property type="entry name" value="RecR_C"/>
    <property type="match status" value="1"/>
</dbReference>
<dbReference type="Pfam" id="PF21176">
    <property type="entry name" value="RecR_HhH"/>
    <property type="match status" value="1"/>
</dbReference>
<dbReference type="Pfam" id="PF02132">
    <property type="entry name" value="RecR_ZnF"/>
    <property type="match status" value="1"/>
</dbReference>
<dbReference type="Pfam" id="PF13662">
    <property type="entry name" value="Toprim_4"/>
    <property type="match status" value="1"/>
</dbReference>
<dbReference type="SMART" id="SM00493">
    <property type="entry name" value="TOPRIM"/>
    <property type="match status" value="1"/>
</dbReference>
<dbReference type="SUPFAM" id="SSF111304">
    <property type="entry name" value="Recombination protein RecR"/>
    <property type="match status" value="1"/>
</dbReference>
<dbReference type="PROSITE" id="PS01300">
    <property type="entry name" value="RECR"/>
    <property type="match status" value="1"/>
</dbReference>
<dbReference type="PROSITE" id="PS50880">
    <property type="entry name" value="TOPRIM"/>
    <property type="match status" value="1"/>
</dbReference>
<comment type="function">
    <text evidence="1">May play a role in DNA repair. It seems to be involved in an RecBC-independent recombinational process of DNA repair. It may act with RecF and RecO.</text>
</comment>
<comment type="similarity">
    <text evidence="1">Belongs to the RecR family.</text>
</comment>
<evidence type="ECO:0000255" key="1">
    <source>
        <dbReference type="HAMAP-Rule" id="MF_00017"/>
    </source>
</evidence>
<name>RECR_XANCP</name>
<organism>
    <name type="scientific">Xanthomonas campestris pv. campestris (strain ATCC 33913 / DSM 3586 / NCPPB 528 / LMG 568 / P 25)</name>
    <dbReference type="NCBI Taxonomy" id="190485"/>
    <lineage>
        <taxon>Bacteria</taxon>
        <taxon>Pseudomonadati</taxon>
        <taxon>Pseudomonadota</taxon>
        <taxon>Gammaproteobacteria</taxon>
        <taxon>Lysobacterales</taxon>
        <taxon>Lysobacteraceae</taxon>
        <taxon>Xanthomonas</taxon>
    </lineage>
</organism>